<proteinExistence type="inferred from homology"/>
<dbReference type="EC" id="5.4.99.25" evidence="1"/>
<dbReference type="EMBL" id="CP000260">
    <property type="protein sequence ID" value="ABF34141.1"/>
    <property type="molecule type" value="Genomic_DNA"/>
</dbReference>
<dbReference type="SMR" id="Q1JGK3"/>
<dbReference type="KEGG" id="sph:MGAS10270_Spy1076"/>
<dbReference type="HOGENOM" id="CLU_032087_0_1_9"/>
<dbReference type="Proteomes" id="UP000002436">
    <property type="component" value="Chromosome"/>
</dbReference>
<dbReference type="GO" id="GO:0003723">
    <property type="term" value="F:RNA binding"/>
    <property type="evidence" value="ECO:0007669"/>
    <property type="project" value="InterPro"/>
</dbReference>
<dbReference type="GO" id="GO:0160148">
    <property type="term" value="F:tRNA pseudouridine(55) synthase activity"/>
    <property type="evidence" value="ECO:0007669"/>
    <property type="project" value="UniProtKB-EC"/>
</dbReference>
<dbReference type="GO" id="GO:1990481">
    <property type="term" value="P:mRNA pseudouridine synthesis"/>
    <property type="evidence" value="ECO:0007669"/>
    <property type="project" value="TreeGrafter"/>
</dbReference>
<dbReference type="GO" id="GO:0031119">
    <property type="term" value="P:tRNA pseudouridine synthesis"/>
    <property type="evidence" value="ECO:0007669"/>
    <property type="project" value="UniProtKB-UniRule"/>
</dbReference>
<dbReference type="CDD" id="cd02573">
    <property type="entry name" value="PseudoU_synth_EcTruB"/>
    <property type="match status" value="1"/>
</dbReference>
<dbReference type="FunFam" id="3.30.2350.10:FF:000011">
    <property type="entry name" value="tRNA pseudouridine synthase B"/>
    <property type="match status" value="1"/>
</dbReference>
<dbReference type="Gene3D" id="3.30.2350.10">
    <property type="entry name" value="Pseudouridine synthase"/>
    <property type="match status" value="1"/>
</dbReference>
<dbReference type="HAMAP" id="MF_01080">
    <property type="entry name" value="TruB_bact"/>
    <property type="match status" value="1"/>
</dbReference>
<dbReference type="InterPro" id="IPR020103">
    <property type="entry name" value="PsdUridine_synth_cat_dom_sf"/>
</dbReference>
<dbReference type="InterPro" id="IPR002501">
    <property type="entry name" value="PsdUridine_synth_N"/>
</dbReference>
<dbReference type="InterPro" id="IPR014780">
    <property type="entry name" value="tRNA_psdUridine_synth_TruB"/>
</dbReference>
<dbReference type="InterPro" id="IPR032819">
    <property type="entry name" value="TruB_C"/>
</dbReference>
<dbReference type="NCBIfam" id="TIGR00431">
    <property type="entry name" value="TruB"/>
    <property type="match status" value="1"/>
</dbReference>
<dbReference type="PANTHER" id="PTHR13767:SF2">
    <property type="entry name" value="PSEUDOURIDYLATE SYNTHASE TRUB1"/>
    <property type="match status" value="1"/>
</dbReference>
<dbReference type="PANTHER" id="PTHR13767">
    <property type="entry name" value="TRNA-PSEUDOURIDINE SYNTHASE"/>
    <property type="match status" value="1"/>
</dbReference>
<dbReference type="Pfam" id="PF16198">
    <property type="entry name" value="TruB_C_2"/>
    <property type="match status" value="1"/>
</dbReference>
<dbReference type="Pfam" id="PF01509">
    <property type="entry name" value="TruB_N"/>
    <property type="match status" value="1"/>
</dbReference>
<dbReference type="SUPFAM" id="SSF55120">
    <property type="entry name" value="Pseudouridine synthase"/>
    <property type="match status" value="1"/>
</dbReference>
<reference key="1">
    <citation type="journal article" date="2006" name="Proc. Natl. Acad. Sci. U.S.A.">
        <title>Molecular genetic anatomy of inter- and intraserotype variation in the human bacterial pathogen group A Streptococcus.</title>
        <authorList>
            <person name="Beres S.B."/>
            <person name="Richter E.W."/>
            <person name="Nagiec M.J."/>
            <person name="Sumby P."/>
            <person name="Porcella S.F."/>
            <person name="DeLeo F.R."/>
            <person name="Musser J.M."/>
        </authorList>
    </citation>
    <scope>NUCLEOTIDE SEQUENCE [LARGE SCALE GENOMIC DNA]</scope>
    <source>
        <strain>MGAS10270</strain>
    </source>
</reference>
<name>TRUB_STRPD</name>
<gene>
    <name evidence="1" type="primary">truB</name>
    <name type="ordered locus">MGAS10270_Spy1076</name>
</gene>
<protein>
    <recommendedName>
        <fullName evidence="1">tRNA pseudouridine synthase B</fullName>
        <ecNumber evidence="1">5.4.99.25</ecNumber>
    </recommendedName>
    <alternativeName>
        <fullName evidence="1">tRNA pseudouridine(55) synthase</fullName>
        <shortName evidence="1">Psi55 synthase</shortName>
    </alternativeName>
    <alternativeName>
        <fullName evidence="1">tRNA pseudouridylate synthase</fullName>
    </alternativeName>
    <alternativeName>
        <fullName evidence="1">tRNA-uridine isomerase</fullName>
    </alternativeName>
</protein>
<feature type="chain" id="PRO_1000084699" description="tRNA pseudouridine synthase B">
    <location>
        <begin position="1"/>
        <end position="294"/>
    </location>
</feature>
<feature type="active site" description="Nucleophile" evidence="1">
    <location>
        <position position="39"/>
    </location>
</feature>
<organism>
    <name type="scientific">Streptococcus pyogenes serotype M2 (strain MGAS10270)</name>
    <dbReference type="NCBI Taxonomy" id="370552"/>
    <lineage>
        <taxon>Bacteria</taxon>
        <taxon>Bacillati</taxon>
        <taxon>Bacillota</taxon>
        <taxon>Bacilli</taxon>
        <taxon>Lactobacillales</taxon>
        <taxon>Streptococcaceae</taxon>
        <taxon>Streptococcus</taxon>
    </lineage>
</organism>
<sequence length="294" mass="32418">MINGIINLKKEAGMTSHDAVFKLRKLLQEKKIGHGGTLDPDVVGVLPIAVGKATRVIEYMTEAGKVYEGQVTLGYSTTTEDASGEVVARSSLPAVLTEELVDQTMTTFLGKITQTPPMYSAVKVNGRKLYEYARAGESVERPRREVTISQFERTSPLNFTEDDLCRFSFKVACSKGTYVRTLAVDLGRALGVESHMSFLQRSASAGLTLETAYTLGEIADMVSKQEMSFLLPIEYGVADLPKMVIDDTELTEISFGRRLSLPSQEPLLAAFHGEKVIAILEKRDQEYKPKKVLI</sequence>
<evidence type="ECO:0000255" key="1">
    <source>
        <dbReference type="HAMAP-Rule" id="MF_01080"/>
    </source>
</evidence>
<comment type="function">
    <text evidence="1">Responsible for synthesis of pseudouridine from uracil-55 in the psi GC loop of transfer RNAs.</text>
</comment>
<comment type="catalytic activity">
    <reaction evidence="1">
        <text>uridine(55) in tRNA = pseudouridine(55) in tRNA</text>
        <dbReference type="Rhea" id="RHEA:42532"/>
        <dbReference type="Rhea" id="RHEA-COMP:10101"/>
        <dbReference type="Rhea" id="RHEA-COMP:10102"/>
        <dbReference type="ChEBI" id="CHEBI:65314"/>
        <dbReference type="ChEBI" id="CHEBI:65315"/>
        <dbReference type="EC" id="5.4.99.25"/>
    </reaction>
</comment>
<comment type="similarity">
    <text evidence="1">Belongs to the pseudouridine synthase TruB family. Type 1 subfamily.</text>
</comment>
<keyword id="KW-0413">Isomerase</keyword>
<keyword id="KW-0819">tRNA processing</keyword>
<accession>Q1JGK3</accession>